<name>NRAM_I72A0</name>
<comment type="function">
    <text evidence="1">Catalyzes the removal of terminal sialic acid residues from viral and cellular glycoconjugates. Cleaves off the terminal sialic acids on the glycosylated HA during virus budding to facilitate virus release. Additionally helps virus spread through the circulation by further removing sialic acids from the cell surface. These cleavages prevent self-aggregation and ensure the efficient spread of the progeny virus from cell to cell. Otherwise, infection would be limited to one round of replication. Described as a receptor-destroying enzyme because it cleaves a terminal sialic acid from the cellular receptors. May facilitate viral invasion of the upper airways by cleaving the sialic acid moieties on the mucin of the airway epithelial cells. Likely to plays a role in the budding process through its association with lipid rafts during intracellular transport. May additionally display a raft-association independent effect on budding. Plays a role in the determination of host range restriction on replication and virulence. Sialidase activity in late endosome/lysosome traffic seems to enhance virus replication.</text>
</comment>
<comment type="catalytic activity">
    <reaction evidence="1">
        <text>Hydrolysis of alpha-(2-&gt;3)-, alpha-(2-&gt;6)-, alpha-(2-&gt;8)- glycosidic linkages of terminal sialic acid residues in oligosaccharides, glycoproteins, glycolipids, colominic acid and synthetic substrates.</text>
        <dbReference type="EC" id="3.2.1.18"/>
    </reaction>
</comment>
<comment type="cofactor">
    <cofactor evidence="1">
        <name>Ca(2+)</name>
        <dbReference type="ChEBI" id="CHEBI:29108"/>
    </cofactor>
</comment>
<comment type="activity regulation">
    <text evidence="1">Inhibited by the neuraminidase inhibitors zanamivir (Relenza) and oseltamivir (Tamiflu). These drugs interfere with the release of progeny virus from infected cells and are effective against all influenza strains. Resistance to neuraminidase inhibitors is quite rare.</text>
</comment>
<comment type="subunit">
    <text evidence="1">Homotetramer.</text>
</comment>
<comment type="subcellular location">
    <subcellularLocation>
        <location evidence="1">Virion membrane</location>
    </subcellularLocation>
    <subcellularLocation>
        <location evidence="1">Host apical cell membrane</location>
        <topology evidence="1">Single-pass type II membrane protein</topology>
    </subcellularLocation>
    <text evidence="1">Preferentially accumulates at the apical plasma membrane in infected polarized epithelial cells, which is the virus assembly site. Uses lipid rafts for cell surface transport and apical sorting. In the virion, forms a mushroom-shaped spike on the surface of the membrane.</text>
</comment>
<comment type="domain">
    <text evidence="1">Intact N-terminus is essential for virion morphogenesis. Possesses two apical sorting signals, one in the ectodomain, which is likely to be a glycan, and the other in the transmembrane domain. The transmembrane domain also plays a role in lipid raft association.</text>
</comment>
<comment type="PTM">
    <text evidence="1">N-glycosylated.</text>
</comment>
<comment type="miscellaneous">
    <text>The influenza A genome consist of 8 RNA segments. Genetic variation of hemagglutinin and/or neuraminidase genes results in the emergence of new influenza strains. The mechanism of variation can be the result of point mutations or the result of genetic reassortment between segments of two different strains.</text>
</comment>
<comment type="similarity">
    <text evidence="1">Belongs to the glycosyl hydrolase 34 family.</text>
</comment>
<proteinExistence type="inferred from homology"/>
<organismHost>
    <name type="scientific">Aves</name>
    <dbReference type="NCBI Taxonomy" id="8782"/>
</organismHost>
<organismHost>
    <name type="scientific">Equus caballus</name>
    <name type="common">Horse</name>
    <dbReference type="NCBI Taxonomy" id="9796"/>
</organismHost>
<gene>
    <name evidence="1" type="primary">NA</name>
</gene>
<reference key="1">
    <citation type="journal article" date="1993" name="Virology">
        <title>Phylogenetic analysis of the N8 neuraminidase gene of influenza A viruses.</title>
        <authorList>
            <person name="Saito T."/>
            <person name="Kawaoka Y."/>
            <person name="Webster R.G."/>
        </authorList>
    </citation>
    <scope>NUCLEOTIDE SEQUENCE [GENOMIC RNA]</scope>
</reference>
<reference key="2">
    <citation type="journal article" date="2004" name="Virus Res.">
        <title>Assembly and budding of influenza virus.</title>
        <authorList>
            <person name="Nayak D.P."/>
            <person name="Hui E.K."/>
            <person name="Barman S."/>
        </authorList>
    </citation>
    <scope>REVIEW</scope>
</reference>
<reference key="3">
    <citation type="journal article" date="2005" name="N. Engl. J. Med.">
        <title>Neuraminidase inhibitors for influenza.</title>
        <authorList>
            <person name="Moscona A."/>
        </authorList>
    </citation>
    <scope>REVIEW</scope>
</reference>
<reference key="4">
    <citation type="journal article" date="2005" name="Biol. Pharm. Bull.">
        <title>Sialobiology of influenza: molecular mechanism of host range variation of influenza viruses.</title>
        <authorList>
            <person name="Suzuki Y."/>
        </authorList>
    </citation>
    <scope>REVIEW</scope>
</reference>
<keyword id="KW-0106">Calcium</keyword>
<keyword id="KW-1015">Disulfide bond</keyword>
<keyword id="KW-0325">Glycoprotein</keyword>
<keyword id="KW-0326">Glycosidase</keyword>
<keyword id="KW-1032">Host cell membrane</keyword>
<keyword id="KW-1043">Host membrane</keyword>
<keyword id="KW-0378">Hydrolase</keyword>
<keyword id="KW-0472">Membrane</keyword>
<keyword id="KW-0479">Metal-binding</keyword>
<keyword id="KW-0735">Signal-anchor</keyword>
<keyword id="KW-0812">Transmembrane</keyword>
<keyword id="KW-1133">Transmembrane helix</keyword>
<keyword id="KW-0946">Virion</keyword>
<protein>
    <recommendedName>
        <fullName evidence="1">Neuraminidase</fullName>
        <ecNumber evidence="1">3.2.1.18</ecNumber>
    </recommendedName>
</protein>
<sequence length="470" mass="51892">MNPNQKIITIGSVSLGLVILSIILHVVSIIVTVLVLSNTGTGLNCNGTIIKEYNETVRVERITQWYNTNIIEYIGRPSNEYYMNNTESLCEAQGFAPFSKDNGIRIGSRGHVFVIREPFVSCSPLECRTFFLTQGSLLNDKHSNGTVKDRSPYRTLMSVEVGQSPNVYQARFEAVAWSATACHDGKKWMTVGVTGPDAQAVAVVHYGGVPVDVINSWAGDILRTQESSCTCIKGDCYWVMTDGPANRQAQYRIFKAKDGRIIGQNDINFNGGHIEECSCYPNEGKVECVCRDNWTGTNRPILVISPNLSYTVGYLCAGIPTDTPRGEDSQFTGSCTSPLGSQGYGVKGFGFRQGNDVWVGRTISKTSRSGFEILKIKNGWTQNSKDQIQKQVIVDNLNWSGYSGSFTLPVELTKKGCLVPCFWVEMIRGKPEEVTIWTSSSSIVMCGVDNKVANWSWHDGAILPFDIDKM</sequence>
<accession>Q07576</accession>
<evidence type="ECO:0000255" key="1">
    <source>
        <dbReference type="HAMAP-Rule" id="MF_04071"/>
    </source>
</evidence>
<dbReference type="EC" id="3.2.1.18" evidence="1"/>
<dbReference type="EMBL" id="L06577">
    <property type="protein sequence ID" value="AAA43355.1"/>
    <property type="molecule type" value="Genomic_RNA"/>
</dbReference>
<dbReference type="SMR" id="Q07576"/>
<dbReference type="CAZy" id="GH34">
    <property type="family name" value="Glycoside Hydrolase Family 34"/>
</dbReference>
<dbReference type="GlyCosmos" id="Q07576">
    <property type="glycosylation" value="8 sites, No reported glycans"/>
</dbReference>
<dbReference type="GO" id="GO:0020002">
    <property type="term" value="C:host cell plasma membrane"/>
    <property type="evidence" value="ECO:0007669"/>
    <property type="project" value="UniProtKB-SubCell"/>
</dbReference>
<dbReference type="GO" id="GO:0016020">
    <property type="term" value="C:membrane"/>
    <property type="evidence" value="ECO:0007669"/>
    <property type="project" value="UniProtKB-UniRule"/>
</dbReference>
<dbReference type="GO" id="GO:0055036">
    <property type="term" value="C:virion membrane"/>
    <property type="evidence" value="ECO:0007669"/>
    <property type="project" value="UniProtKB-SubCell"/>
</dbReference>
<dbReference type="GO" id="GO:0004308">
    <property type="term" value="F:exo-alpha-sialidase activity"/>
    <property type="evidence" value="ECO:0007669"/>
    <property type="project" value="UniProtKB-UniRule"/>
</dbReference>
<dbReference type="GO" id="GO:0046872">
    <property type="term" value="F:metal ion binding"/>
    <property type="evidence" value="ECO:0007669"/>
    <property type="project" value="UniProtKB-UniRule"/>
</dbReference>
<dbReference type="GO" id="GO:0005975">
    <property type="term" value="P:carbohydrate metabolic process"/>
    <property type="evidence" value="ECO:0007669"/>
    <property type="project" value="InterPro"/>
</dbReference>
<dbReference type="GO" id="GO:0046761">
    <property type="term" value="P:viral budding from plasma membrane"/>
    <property type="evidence" value="ECO:0007669"/>
    <property type="project" value="UniProtKB-UniRule"/>
</dbReference>
<dbReference type="Gene3D" id="2.120.10.10">
    <property type="match status" value="1"/>
</dbReference>
<dbReference type="HAMAP" id="MF_04071">
    <property type="entry name" value="INFV_NRAM"/>
    <property type="match status" value="1"/>
</dbReference>
<dbReference type="InterPro" id="IPR001860">
    <property type="entry name" value="Glyco_hydro_34"/>
</dbReference>
<dbReference type="InterPro" id="IPR036278">
    <property type="entry name" value="Sialidase_sf"/>
</dbReference>
<dbReference type="Pfam" id="PF00064">
    <property type="entry name" value="Neur"/>
    <property type="match status" value="1"/>
</dbReference>
<dbReference type="SUPFAM" id="SSF50939">
    <property type="entry name" value="Sialidases"/>
    <property type="match status" value="1"/>
</dbReference>
<feature type="chain" id="PRO_0000078693" description="Neuraminidase">
    <location>
        <begin position="1"/>
        <end position="470"/>
    </location>
</feature>
<feature type="topological domain" description="Intravirion" evidence="1">
    <location>
        <begin position="1"/>
        <end position="14"/>
    </location>
</feature>
<feature type="transmembrane region" description="Helical" evidence="1">
    <location>
        <begin position="15"/>
        <end position="35"/>
    </location>
</feature>
<feature type="topological domain" description="Virion surface" evidence="1">
    <location>
        <begin position="36"/>
        <end position="470"/>
    </location>
</feature>
<feature type="region of interest" description="Involved in apical transport and lipid raft association" evidence="1">
    <location>
        <begin position="11"/>
        <end position="32"/>
    </location>
</feature>
<feature type="region of interest" description="Hypervariable stalk region" evidence="1">
    <location>
        <begin position="32"/>
        <end position="86"/>
    </location>
</feature>
<feature type="region of interest" description="Head of neuraminidase" evidence="1">
    <location>
        <begin position="89"/>
        <end position="470"/>
    </location>
</feature>
<feature type="active site" description="Proton donor/acceptor" evidence="1">
    <location>
        <position position="149"/>
    </location>
</feature>
<feature type="active site" description="Nucleophile" evidence="1">
    <location>
        <position position="402"/>
    </location>
</feature>
<feature type="binding site" evidence="1">
    <location>
        <position position="116"/>
    </location>
    <ligand>
        <name>substrate</name>
    </ligand>
</feature>
<feature type="binding site" evidence="1">
    <location>
        <position position="150"/>
    </location>
    <ligand>
        <name>substrate</name>
    </ligand>
</feature>
<feature type="binding site" evidence="1">
    <location>
        <begin position="275"/>
        <end position="276"/>
    </location>
    <ligand>
        <name>substrate</name>
    </ligand>
</feature>
<feature type="binding site" evidence="1">
    <location>
        <position position="291"/>
    </location>
    <ligand>
        <name>substrate</name>
    </ligand>
</feature>
<feature type="binding site" evidence="1">
    <location>
        <position position="292"/>
    </location>
    <ligand>
        <name>Ca(2+)</name>
        <dbReference type="ChEBI" id="CHEBI:29108"/>
    </ligand>
</feature>
<feature type="binding site" evidence="1">
    <location>
        <position position="296"/>
    </location>
    <ligand>
        <name>Ca(2+)</name>
        <dbReference type="ChEBI" id="CHEBI:29108"/>
    </ligand>
</feature>
<feature type="binding site" evidence="1">
    <location>
        <position position="322"/>
    </location>
    <ligand>
        <name>Ca(2+)</name>
        <dbReference type="ChEBI" id="CHEBI:29108"/>
    </ligand>
</feature>
<feature type="binding site" evidence="1">
    <location>
        <position position="368"/>
    </location>
    <ligand>
        <name>substrate</name>
    </ligand>
</feature>
<feature type="glycosylation site" description="N-linked (GlcNAc...) asparagine; by host" evidence="1">
    <location>
        <position position="46"/>
    </location>
</feature>
<feature type="glycosylation site" description="N-linked (GlcNAc...) asparagine; by host" evidence="1">
    <location>
        <position position="54"/>
    </location>
</feature>
<feature type="glycosylation site" description="N-linked (GlcNAc...) asparagine; by host" evidence="1">
    <location>
        <position position="84"/>
    </location>
</feature>
<feature type="glycosylation site" description="N-linked (GlcNAc...) asparagine; by host" evidence="1">
    <location>
        <position position="144"/>
    </location>
</feature>
<feature type="glycosylation site" description="N-linked (GlcNAc...) asparagine; by host" evidence="1">
    <location>
        <position position="293"/>
    </location>
</feature>
<feature type="glycosylation site" description="N-linked (GlcNAc...) asparagine; by host" evidence="1">
    <location>
        <position position="307"/>
    </location>
</feature>
<feature type="glycosylation site" description="N-linked (GlcNAc...) asparagine; by host" evidence="1">
    <location>
        <position position="398"/>
    </location>
</feature>
<feature type="glycosylation site" description="N-linked (GlcNAc...) asparagine; by host" evidence="1">
    <location>
        <position position="454"/>
    </location>
</feature>
<feature type="disulfide bond" evidence="1">
    <location>
        <begin position="90"/>
        <end position="417"/>
    </location>
</feature>
<feature type="disulfide bond" evidence="1">
    <location>
        <begin position="122"/>
        <end position="127"/>
    </location>
</feature>
<feature type="disulfide bond" evidence="1">
    <location>
        <begin position="182"/>
        <end position="229"/>
    </location>
</feature>
<feature type="disulfide bond" evidence="1">
    <location>
        <begin position="231"/>
        <end position="236"/>
    </location>
</feature>
<feature type="disulfide bond" evidence="1">
    <location>
        <begin position="277"/>
        <end position="290"/>
    </location>
</feature>
<feature type="disulfide bond" evidence="1">
    <location>
        <begin position="279"/>
        <end position="288"/>
    </location>
</feature>
<feature type="disulfide bond" evidence="1">
    <location>
        <begin position="316"/>
        <end position="335"/>
    </location>
</feature>
<feature type="disulfide bond" evidence="1">
    <location>
        <begin position="421"/>
        <end position="446"/>
    </location>
</feature>
<organism>
    <name type="scientific">Influenza A virus (strain A/Equine/Algiers/1972 H3N8)</name>
    <dbReference type="NCBI Taxonomy" id="387214"/>
    <lineage>
        <taxon>Viruses</taxon>
        <taxon>Riboviria</taxon>
        <taxon>Orthornavirae</taxon>
        <taxon>Negarnaviricota</taxon>
        <taxon>Polyploviricotina</taxon>
        <taxon>Insthoviricetes</taxon>
        <taxon>Articulavirales</taxon>
        <taxon>Orthomyxoviridae</taxon>
        <taxon>Alphainfluenzavirus</taxon>
        <taxon>Alphainfluenzavirus influenzae</taxon>
        <taxon>Influenza A virus</taxon>
    </lineage>
</organism>